<name>TRAY4_ECOLX</name>
<organism>
    <name type="scientific">Escherichia coli</name>
    <dbReference type="NCBI Taxonomy" id="562"/>
    <lineage>
        <taxon>Bacteria</taxon>
        <taxon>Pseudomonadati</taxon>
        <taxon>Pseudomonadota</taxon>
        <taxon>Gammaproteobacteria</taxon>
        <taxon>Enterobacterales</taxon>
        <taxon>Enterobacteriaceae</taxon>
        <taxon>Escherichia</taxon>
    </lineage>
</organism>
<geneLocation type="plasmid">
    <name>ColB4-K98</name>
</geneLocation>
<sequence>MRRRNARGGISRTVSVYLDEDTNNRLIKAKDRSGRSKTIEVQIRLRDHLKRFPDFYNEEIFREVTEESESTFKEL</sequence>
<proteinExistence type="inferred from homology"/>
<reference key="1">
    <citation type="journal article" date="1986" name="J. Bacteriol.">
        <title>Origin of transfer of IncF plasmids and nucleotide sequences of the type II oriT, traM, and traY alleles from ColB4-K98 and the type IV traY allele from R100-1.</title>
        <authorList>
            <person name="Finlay B.B."/>
            <person name="Frost L.S."/>
            <person name="Paranchych W."/>
        </authorList>
    </citation>
    <scope>NUCLEOTIDE SEQUENCE [GENOMIC DNA]</scope>
</reference>
<keyword id="KW-0010">Activator</keyword>
<keyword id="KW-0184">Conjugation</keyword>
<keyword id="KW-0963">Cytoplasm</keyword>
<keyword id="KW-0238">DNA-binding</keyword>
<keyword id="KW-0614">Plasmid</keyword>
<keyword id="KW-0804">Transcription</keyword>
<keyword id="KW-0805">Transcription regulation</keyword>
<gene>
    <name type="primary">traY</name>
</gene>
<evidence type="ECO:0000250" key="1"/>
<evidence type="ECO:0000305" key="2"/>
<accession>P05836</accession>
<dbReference type="EMBL" id="AH003616">
    <property type="protein sequence ID" value="AAB04665.1"/>
    <property type="molecule type" value="Genomic_DNA"/>
</dbReference>
<dbReference type="PIR" id="B25033">
    <property type="entry name" value="BVECKY"/>
</dbReference>
<dbReference type="RefSeq" id="WP_001254386.1">
    <property type="nucleotide sequence ID" value="NZ_WXYV01000003.1"/>
</dbReference>
<dbReference type="RefSeq" id="YP_006953836.1">
    <property type="nucleotide sequence ID" value="NC_019089.1"/>
</dbReference>
<dbReference type="RefSeq" id="YP_009066477.1">
    <property type="nucleotide sequence ID" value="NC_025106.1"/>
</dbReference>
<dbReference type="SMR" id="P05836"/>
<dbReference type="GO" id="GO:0005737">
    <property type="term" value="C:cytoplasm"/>
    <property type="evidence" value="ECO:0007669"/>
    <property type="project" value="UniProtKB-SubCell"/>
</dbReference>
<dbReference type="GO" id="GO:0003677">
    <property type="term" value="F:DNA binding"/>
    <property type="evidence" value="ECO:0007669"/>
    <property type="project" value="UniProtKB-KW"/>
</dbReference>
<dbReference type="InterPro" id="IPR008876">
    <property type="entry name" value="TraY"/>
</dbReference>
<dbReference type="NCBIfam" id="NF010302">
    <property type="entry name" value="PRK13740.1-3"/>
    <property type="match status" value="1"/>
</dbReference>
<dbReference type="Pfam" id="PF05509">
    <property type="entry name" value="TraY"/>
    <property type="match status" value="1"/>
</dbReference>
<feature type="chain" id="PRO_0000068483" description="Relaxosome protein TraY">
    <location>
        <begin position="1"/>
        <end position="75"/>
    </location>
</feature>
<comment type="function">
    <text evidence="1">Conjugative DNA transfer (CDT) is the unidirectional transfer of ssDNA plasmid from a donor to a recipient cell. It is the central mechanism by which antibiotic resistance and virulence factors are propagated in bacterial populations. Part of the relaxosome, which facilitates a site- and strand-specific cut in the origin of transfer by TraI, at the nic site. Relaxosome formation requires binding of IHF and TraY to the oriT region, which then facilitates binding of TraI. Also positively regulates tra gene expression (By similarity).</text>
</comment>
<comment type="subunit">
    <text evidence="1">Part of the relaxosome, a complex composed of plasmid encoded TraI, TraM, TraY and host-encoded IHF bound to the F plasmid origin of transfer (oriT). Interacts with TraM, probably through its C-terminus (By similarity).</text>
</comment>
<comment type="subcellular location">
    <subcellularLocation>
        <location evidence="1">Cytoplasm</location>
    </subcellularLocation>
</comment>
<comment type="similarity">
    <text evidence="2">Belongs to the TraY family.</text>
</comment>
<protein>
    <recommendedName>
        <fullName>Relaxosome protein TraY</fullName>
    </recommendedName>
</protein>